<protein>
    <recommendedName>
        <fullName>Snaclec stejaggregin-A subunit beta-3</fullName>
    </recommendedName>
</protein>
<proteinExistence type="evidence at transcript level"/>
<dbReference type="EMBL" id="AF354927">
    <property type="protein sequence ID" value="AAQ15169.1"/>
    <property type="molecule type" value="mRNA"/>
</dbReference>
<dbReference type="SMR" id="Q71RP8"/>
<dbReference type="GO" id="GO:0005576">
    <property type="term" value="C:extracellular region"/>
    <property type="evidence" value="ECO:0007669"/>
    <property type="project" value="UniProtKB-SubCell"/>
</dbReference>
<dbReference type="GO" id="GO:0090729">
    <property type="term" value="F:toxin activity"/>
    <property type="evidence" value="ECO:0007669"/>
    <property type="project" value="UniProtKB-KW"/>
</dbReference>
<dbReference type="FunFam" id="3.10.100.10:FF:000087">
    <property type="entry name" value="Snaclec rhodocetin subunit delta"/>
    <property type="match status" value="1"/>
</dbReference>
<dbReference type="Gene3D" id="3.10.100.10">
    <property type="entry name" value="Mannose-Binding Protein A, subunit A"/>
    <property type="match status" value="1"/>
</dbReference>
<dbReference type="InterPro" id="IPR001304">
    <property type="entry name" value="C-type_lectin-like"/>
</dbReference>
<dbReference type="InterPro" id="IPR016186">
    <property type="entry name" value="C-type_lectin-like/link_sf"/>
</dbReference>
<dbReference type="InterPro" id="IPR050111">
    <property type="entry name" value="C-type_lectin/snaclec_domain"/>
</dbReference>
<dbReference type="InterPro" id="IPR018378">
    <property type="entry name" value="C-type_lectin_CS"/>
</dbReference>
<dbReference type="InterPro" id="IPR016187">
    <property type="entry name" value="CTDL_fold"/>
</dbReference>
<dbReference type="PANTHER" id="PTHR22803">
    <property type="entry name" value="MANNOSE, PHOSPHOLIPASE, LECTIN RECEPTOR RELATED"/>
    <property type="match status" value="1"/>
</dbReference>
<dbReference type="Pfam" id="PF00059">
    <property type="entry name" value="Lectin_C"/>
    <property type="match status" value="1"/>
</dbReference>
<dbReference type="PRINTS" id="PR01504">
    <property type="entry name" value="PNCREATITSAP"/>
</dbReference>
<dbReference type="SMART" id="SM00034">
    <property type="entry name" value="CLECT"/>
    <property type="match status" value="1"/>
</dbReference>
<dbReference type="SUPFAM" id="SSF56436">
    <property type="entry name" value="C-type lectin-like"/>
    <property type="match status" value="1"/>
</dbReference>
<dbReference type="PROSITE" id="PS00615">
    <property type="entry name" value="C_TYPE_LECTIN_1"/>
    <property type="match status" value="1"/>
</dbReference>
<dbReference type="PROSITE" id="PS50041">
    <property type="entry name" value="C_TYPE_LECTIN_2"/>
    <property type="match status" value="1"/>
</dbReference>
<name>SLAB3_TRIST</name>
<feature type="signal peptide" evidence="2">
    <location>
        <begin position="1"/>
        <end position="23"/>
    </location>
</feature>
<feature type="chain" id="PRO_0000355304" description="Snaclec stejaggregin-A subunit beta-3">
    <location>
        <begin position="24"/>
        <end position="148"/>
    </location>
</feature>
<feature type="domain" description="C-type lectin" evidence="3">
    <location>
        <begin position="34"/>
        <end position="145"/>
    </location>
</feature>
<feature type="glycosylation site" description="N-linked (GlcNAc...) asparagine" evidence="2">
    <location>
        <position position="47"/>
    </location>
</feature>
<feature type="glycosylation site" description="N-linked (GlcNAc...) asparagine" evidence="2">
    <location>
        <position position="78"/>
    </location>
</feature>
<feature type="disulfide bond" description="Interchain" evidence="3">
    <location>
        <position position="26"/>
    </location>
</feature>
<feature type="disulfide bond" evidence="3">
    <location>
        <begin position="27"/>
        <end position="38"/>
    </location>
</feature>
<feature type="disulfide bond" evidence="3">
    <location>
        <begin position="55"/>
        <end position="144"/>
    </location>
</feature>
<feature type="disulfide bond" description="Interchain" evidence="3">
    <location>
        <position position="100"/>
    </location>
</feature>
<feature type="disulfide bond" evidence="3">
    <location>
        <begin position="121"/>
        <end position="136"/>
    </location>
</feature>
<sequence>MGRFISVSFGLLVVFLSLSGAGAGFCCPLGWSSYDLYCYKVFKQEMNWTDAEKFCTEQHTGSHLVSFHSSEEADFVVNMTYPILKLDFVWIGLSNVWNQCNSEWSDGTKLNYKDWSGESECIASKTIENQWWSRSCSRTHYVVCKFQA</sequence>
<organism>
    <name type="scientific">Trimeresurus stejnegeri</name>
    <name type="common">Chinese green tree viper</name>
    <name type="synonym">Viridovipera stejnegeri</name>
    <dbReference type="NCBI Taxonomy" id="39682"/>
    <lineage>
        <taxon>Eukaryota</taxon>
        <taxon>Metazoa</taxon>
        <taxon>Chordata</taxon>
        <taxon>Craniata</taxon>
        <taxon>Vertebrata</taxon>
        <taxon>Euteleostomi</taxon>
        <taxon>Lepidosauria</taxon>
        <taxon>Squamata</taxon>
        <taxon>Bifurcata</taxon>
        <taxon>Unidentata</taxon>
        <taxon>Episquamata</taxon>
        <taxon>Toxicofera</taxon>
        <taxon>Serpentes</taxon>
        <taxon>Colubroidea</taxon>
        <taxon>Viperidae</taxon>
        <taxon>Crotalinae</taxon>
        <taxon>Trimeresurus</taxon>
    </lineage>
</organism>
<accession>Q71RP8</accession>
<keyword id="KW-1015">Disulfide bond</keyword>
<keyword id="KW-0325">Glycoprotein</keyword>
<keyword id="KW-1199">Hemostasis impairing toxin</keyword>
<keyword id="KW-0964">Secreted</keyword>
<keyword id="KW-0732">Signal</keyword>
<keyword id="KW-0800">Toxin</keyword>
<comment type="function">
    <text evidence="1">Interferes with one step of hemostasis (modulation of platelet aggregation, or coagulation cascade, for example).</text>
</comment>
<comment type="subunit">
    <text evidence="1">Heteromultimer; disulfide-linked.</text>
</comment>
<comment type="subcellular location">
    <subcellularLocation>
        <location evidence="1">Secreted</location>
    </subcellularLocation>
</comment>
<comment type="tissue specificity">
    <text>Expressed by the venom gland.</text>
</comment>
<comment type="similarity">
    <text evidence="4">Belongs to the snaclec family.</text>
</comment>
<evidence type="ECO:0000250" key="1"/>
<evidence type="ECO:0000255" key="2"/>
<evidence type="ECO:0000255" key="3">
    <source>
        <dbReference type="PROSITE-ProRule" id="PRU00040"/>
    </source>
</evidence>
<evidence type="ECO:0000305" key="4"/>
<reference key="1">
    <citation type="submission" date="2001-03" db="EMBL/GenBank/DDBJ databases">
        <title>Cloning and characterization of C-type lectins from Trimeresurus stejnegeri venom.</title>
        <authorList>
            <person name="Lee W.-H."/>
            <person name="Liu H."/>
            <person name="Zhang Y."/>
        </authorList>
    </citation>
    <scope>NUCLEOTIDE SEQUENCE [MRNA]</scope>
    <source>
        <tissue>Venom gland</tissue>
    </source>
</reference>